<feature type="chain" id="PRO_0000402405" description="Movement protein">
    <location>
        <begin position="1"/>
        <end position="511"/>
    </location>
</feature>
<reference key="1">
    <citation type="journal article" date="2007" name="Arch. Virol.">
        <title>Molecular analysis of the genome segments S1, S4, S6, S7 and S12 of a Rice gall dwarf virus isolate from Thailand; completion of the genomic sequence.</title>
        <authorList>
            <person name="Moriyasu Y."/>
            <person name="Maruyama-Funatsuki W."/>
            <person name="Kikuchi A."/>
            <person name="Ichimi K."/>
            <person name="Zhong B."/>
            <person name="Yan J."/>
            <person name="Zhu Y."/>
            <person name="Suga H."/>
            <person name="Watanabe Y."/>
            <person name="Ichiki-Uehara T."/>
            <person name="Shimizu T."/>
            <person name="Hagiwara K."/>
            <person name="Kamiunten H."/>
            <person name="Akutsu K."/>
            <person name="Omura T."/>
        </authorList>
    </citation>
    <scope>NUCLEOTIDE SEQUENCE [GENOMIC RNA]</scope>
</reference>
<protein>
    <recommendedName>
        <fullName>Movement protein</fullName>
    </recommendedName>
    <alternativeName>
        <fullName>Non-structural protein 7</fullName>
        <shortName>Pns7</shortName>
    </alternativeName>
</protein>
<evidence type="ECO:0000250" key="1"/>
<organism>
    <name type="scientific">Rice gall dwarf virus</name>
    <name type="common">RGDV</name>
    <dbReference type="NCBI Taxonomy" id="10986"/>
    <lineage>
        <taxon>Viruses</taxon>
        <taxon>Riboviria</taxon>
        <taxon>Orthornavirae</taxon>
        <taxon>Duplornaviricota</taxon>
        <taxon>Resentoviricetes</taxon>
        <taxon>Reovirales</taxon>
        <taxon>Sedoreoviridae</taxon>
        <taxon>Phytoreovirus</taxon>
    </lineage>
</organism>
<comment type="function">
    <text evidence="1">Transports viral genome to neighboring plant cells directly through plasmosdesmata, without any budding. The movement protein allows efficient cell to cell propagation, by bypassing the host cell wall barrier (By similarity).</text>
</comment>
<comment type="subcellular location">
    <subcellularLocation>
        <location evidence="1">Host cell junction</location>
        <location evidence="1">Host plasmodesma</location>
    </subcellularLocation>
    <subcellularLocation>
        <location evidence="1">Host cytoplasm</location>
    </subcellularLocation>
    <text evidence="1">Constituent of spherical cytoplasmic structures, called virus factories, that appear early after infection and are the site of viral replication and packaging.</text>
</comment>
<accession>A4PBP9</accession>
<organismHost>
    <name type="scientific">Nephotettix cincticeps</name>
    <name type="common">Green rice leafhopper</name>
    <name type="synonym">Selenocephalus cincticeps</name>
    <dbReference type="NCBI Taxonomy" id="94400"/>
</organismHost>
<organismHost>
    <name type="scientific">Oryza sativa</name>
    <name type="common">Rice</name>
    <dbReference type="NCBI Taxonomy" id="4530"/>
</organismHost>
<dbReference type="EMBL" id="AB254454">
    <property type="protein sequence ID" value="BAF49642.1"/>
    <property type="molecule type" value="Genomic_RNA"/>
</dbReference>
<dbReference type="RefSeq" id="YP_001111376.1">
    <property type="nucleotide sequence ID" value="NC_009251.1"/>
</dbReference>
<dbReference type="GeneID" id="4955114"/>
<dbReference type="KEGG" id="vg:4955114"/>
<dbReference type="OrthoDB" id="28989at10239"/>
<dbReference type="Proteomes" id="UP000006720">
    <property type="component" value="Genome"/>
</dbReference>
<dbReference type="GO" id="GO:0030430">
    <property type="term" value="C:host cell cytoplasm"/>
    <property type="evidence" value="ECO:0007669"/>
    <property type="project" value="UniProtKB-SubCell"/>
</dbReference>
<dbReference type="GO" id="GO:0044219">
    <property type="term" value="C:host cell plasmodesma"/>
    <property type="evidence" value="ECO:0007669"/>
    <property type="project" value="UniProtKB-SubCell"/>
</dbReference>
<dbReference type="GO" id="GO:0046740">
    <property type="term" value="P:transport of virus in host, cell to cell"/>
    <property type="evidence" value="ECO:0007669"/>
    <property type="project" value="UniProtKB-KW"/>
</dbReference>
<name>MVP_RGDV</name>
<sequence length="511" mass="58565">MVKLRDISTIAVSESTHNFEVFSGLEGVSDTVANLKSENVEINVLGHNPGSLNILIDASPHFRDEKALSDCFGPQMGGVVYDSYDRMVMKNGRIENYPDTEIPTLDVTPLNVDRSLTPKQKENRNKCKKLFDHLLLEIQRGKITAGCVDDYFAFMHAAYCVLSKVYLPRFKYKHFEISSRLVTIHECNNNTKPSLFWSNRDDESHDYMTIIQMMVQVFSNAMTKYATSHLINEYHNDLDSPTSDILTKVVDELKDIDIEPATYATIVYLWLTGEDEIEDLDVLAVIFDECRSDGFVDNLLVRMLPPCEGASLTSEAIDTGLLYTRNDGYMVYTASMVEEDVNKMEYDRRYGLPLMEFRATNSLVTLRVDYTTKTNKQMKVQLMINKFPKFELMNTDIFSSQYLMLGKNIVIDMIKMTGHMLRGNVQSANLDTQRKLSNLVSSSHPWITRLVANRARDDVHIRFASHMITDLDNLTKREHPKTIFVESLKMLDHFGKSERYELLVYLSAADF</sequence>
<keyword id="KW-1031">Host cell junction</keyword>
<keyword id="KW-1035">Host cytoplasm</keyword>
<keyword id="KW-1185">Reference proteome</keyword>
<keyword id="KW-0813">Transport</keyword>
<keyword id="KW-0916">Viral movement protein</keyword>
<proteinExistence type="inferred from homology"/>